<protein>
    <recommendedName>
        <fullName evidence="1">Maltoporin</fullName>
    </recommendedName>
    <alternativeName>
        <fullName evidence="1">Maltose-inducible porin</fullName>
    </alternativeName>
</protein>
<keyword id="KW-0998">Cell outer membrane</keyword>
<keyword id="KW-0406">Ion transport</keyword>
<keyword id="KW-0472">Membrane</keyword>
<keyword id="KW-0626">Porin</keyword>
<keyword id="KW-0732">Signal</keyword>
<keyword id="KW-0762">Sugar transport</keyword>
<keyword id="KW-0812">Transmembrane</keyword>
<keyword id="KW-1134">Transmembrane beta strand</keyword>
<keyword id="KW-0813">Transport</keyword>
<proteinExistence type="inferred from homology"/>
<dbReference type="EMBL" id="BA000032">
    <property type="protein sequence ID" value="BAC62987.1"/>
    <property type="molecule type" value="Genomic_DNA"/>
</dbReference>
<dbReference type="RefSeq" id="NP_801154.1">
    <property type="nucleotide sequence ID" value="NC_004605.1"/>
</dbReference>
<dbReference type="RefSeq" id="WP_005458362.1">
    <property type="nucleotide sequence ID" value="NC_004605.1"/>
</dbReference>
<dbReference type="SMR" id="P59494"/>
<dbReference type="GeneID" id="1192340"/>
<dbReference type="KEGG" id="vpa:VPA1644"/>
<dbReference type="PATRIC" id="fig|223926.6.peg.4563"/>
<dbReference type="eggNOG" id="COG4580">
    <property type="taxonomic scope" value="Bacteria"/>
</dbReference>
<dbReference type="HOGENOM" id="CLU_032473_4_1_6"/>
<dbReference type="Proteomes" id="UP000002493">
    <property type="component" value="Chromosome 2"/>
</dbReference>
<dbReference type="GO" id="GO:0009279">
    <property type="term" value="C:cell outer membrane"/>
    <property type="evidence" value="ECO:0007669"/>
    <property type="project" value="UniProtKB-SubCell"/>
</dbReference>
<dbReference type="GO" id="GO:0046930">
    <property type="term" value="C:pore complex"/>
    <property type="evidence" value="ECO:0007669"/>
    <property type="project" value="UniProtKB-KW"/>
</dbReference>
<dbReference type="GO" id="GO:0042958">
    <property type="term" value="F:maltodextrin transmembrane transporter activity"/>
    <property type="evidence" value="ECO:0007669"/>
    <property type="project" value="InterPro"/>
</dbReference>
<dbReference type="GO" id="GO:0015481">
    <property type="term" value="F:maltose transporting porin activity"/>
    <property type="evidence" value="ECO:0007669"/>
    <property type="project" value="InterPro"/>
</dbReference>
<dbReference type="GO" id="GO:0006811">
    <property type="term" value="P:monoatomic ion transport"/>
    <property type="evidence" value="ECO:0007669"/>
    <property type="project" value="UniProtKB-KW"/>
</dbReference>
<dbReference type="CDD" id="cd01346">
    <property type="entry name" value="Maltoporin-like"/>
    <property type="match status" value="1"/>
</dbReference>
<dbReference type="Gene3D" id="2.40.170.10">
    <property type="entry name" value="Porin, LamB type"/>
    <property type="match status" value="1"/>
</dbReference>
<dbReference type="HAMAP" id="MF_01301">
    <property type="entry name" value="LamB"/>
    <property type="match status" value="1"/>
</dbReference>
<dbReference type="InterPro" id="IPR050286">
    <property type="entry name" value="G_neg_Bact_CarbUptk_Porin"/>
</dbReference>
<dbReference type="InterPro" id="IPR023738">
    <property type="entry name" value="Maltoporin"/>
</dbReference>
<dbReference type="InterPro" id="IPR003192">
    <property type="entry name" value="Porin_LamB"/>
</dbReference>
<dbReference type="InterPro" id="IPR036998">
    <property type="entry name" value="Porin_LamB_sf"/>
</dbReference>
<dbReference type="NCBIfam" id="NF006860">
    <property type="entry name" value="PRK09360.1"/>
    <property type="match status" value="1"/>
</dbReference>
<dbReference type="PANTHER" id="PTHR38762">
    <property type="entry name" value="CRYPTIC OUTER MEMBRANE PORIN BGLH-RELATED"/>
    <property type="match status" value="1"/>
</dbReference>
<dbReference type="PANTHER" id="PTHR38762:SF1">
    <property type="entry name" value="CRYPTIC OUTER MEMBRANE PORIN BGLH-RELATED"/>
    <property type="match status" value="1"/>
</dbReference>
<dbReference type="Pfam" id="PF02264">
    <property type="entry name" value="LamB"/>
    <property type="match status" value="1"/>
</dbReference>
<dbReference type="SUPFAM" id="SSF56935">
    <property type="entry name" value="Porins"/>
    <property type="match status" value="1"/>
</dbReference>
<feature type="signal peptide" evidence="1">
    <location>
        <begin position="1"/>
        <end position="22"/>
    </location>
</feature>
<feature type="chain" id="PRO_0000025184" description="Maltoporin" evidence="1">
    <location>
        <begin position="23"/>
        <end position="432"/>
    </location>
</feature>
<feature type="site" description="Greasy slide, important in sugar transport" evidence="1">
    <location>
        <position position="28"/>
    </location>
</feature>
<feature type="site" description="Greasy slide, important in sugar transport" evidence="1">
    <location>
        <position position="60"/>
    </location>
</feature>
<feature type="site" description="Greasy slide, important in sugar transport" evidence="1">
    <location>
        <position position="93"/>
    </location>
</feature>
<feature type="site" description="Important in sugar transport" evidence="1">
    <location>
        <position position="154"/>
    </location>
</feature>
<feature type="site" description="Greasy slide, important in sugar transport" evidence="1">
    <location>
        <position position="266"/>
    </location>
</feature>
<feature type="site" description="Greasy slide, important in sugar transport" evidence="1">
    <location>
        <position position="390"/>
    </location>
</feature>
<feature type="site" description="Greasy slide, important in sugar transport" evidence="1">
    <location>
        <position position="431"/>
    </location>
</feature>
<comment type="function">
    <text evidence="1">Involved in the transport of maltose and maltodextrins.</text>
</comment>
<comment type="catalytic activity">
    <reaction evidence="1">
        <text>beta-maltose(in) = beta-maltose(out)</text>
        <dbReference type="Rhea" id="RHEA:29731"/>
        <dbReference type="ChEBI" id="CHEBI:18147"/>
    </reaction>
</comment>
<comment type="subunit">
    <text evidence="1">Homotrimer formed of three 18-stranded antiparallel beta-barrels, containing three independent channels.</text>
</comment>
<comment type="subcellular location">
    <subcellularLocation>
        <location evidence="1">Cell outer membrane</location>
        <topology evidence="1">Multi-pass membrane protein</topology>
    </subcellularLocation>
</comment>
<comment type="induction">
    <text evidence="1 2">By maltose.</text>
</comment>
<comment type="similarity">
    <text evidence="1 2">Belongs to the porin LamB (TC 1.B.3) family.</text>
</comment>
<reference key="1">
    <citation type="journal article" date="2003" name="Lancet">
        <title>Genome sequence of Vibrio parahaemolyticus: a pathogenic mechanism distinct from that of V. cholerae.</title>
        <authorList>
            <person name="Makino K."/>
            <person name="Oshima K."/>
            <person name="Kurokawa K."/>
            <person name="Yokoyama K."/>
            <person name="Uda T."/>
            <person name="Tagomori K."/>
            <person name="Iijima Y."/>
            <person name="Najima M."/>
            <person name="Nakano M."/>
            <person name="Yamashita A."/>
            <person name="Kubota Y."/>
            <person name="Kimura S."/>
            <person name="Yasunaga T."/>
            <person name="Honda T."/>
            <person name="Shinagawa H."/>
            <person name="Hattori M."/>
            <person name="Iida T."/>
        </authorList>
    </citation>
    <scope>NUCLEOTIDE SEQUENCE [LARGE SCALE GENOMIC DNA]</scope>
    <source>
        <strain>RIMD 2210633</strain>
    </source>
</reference>
<gene>
    <name evidence="1" type="primary">lamB</name>
    <name type="ordered locus">VPA1644</name>
</gene>
<organism>
    <name type="scientific">Vibrio parahaemolyticus serotype O3:K6 (strain RIMD 2210633)</name>
    <dbReference type="NCBI Taxonomy" id="223926"/>
    <lineage>
        <taxon>Bacteria</taxon>
        <taxon>Pseudomonadati</taxon>
        <taxon>Pseudomonadota</taxon>
        <taxon>Gammaproteobacteria</taxon>
        <taxon>Vibrionales</taxon>
        <taxon>Vibrionaceae</taxon>
        <taxon>Vibrio</taxon>
    </lineage>
</organism>
<evidence type="ECO:0000255" key="1">
    <source>
        <dbReference type="HAMAP-Rule" id="MF_01301"/>
    </source>
</evidence>
<evidence type="ECO:0000305" key="2"/>
<name>LAMB_VIBPA</name>
<accession>P59494</accession>
<sequence length="432" mass="46963">MKKVSVIAAAVAATLAAGSAFAVDFHGYMRAGVGVNADGGQQLTFEKNKVGRLGNESDIYGEIQLGKEVYNNNGKTFYVDSMLAMTSNGSNDWEGTAANCGLDGTKVKCVDDAQFALRQFNVQAKGVLNFAPEATLWAGKRYYQRHDIHISDFYYWNISGAGAGVEGIEAGPGKLSFAWVRNDRNDNFNSGMGSGDTPDVGNGGSVNVNTLDVRYAGIPVWENGSLEVGLDYALVNETEDASKAAKDAKDGVMFTAELTQGLDSGFNKTVFQYGTEGYSKAFAFYGDGSWYGAEARDGASGYRFINWGVIGLGDNWELGHQLVYGVGEDMWAADHKWEAMSAVVRPVFKWDDNHKTIFEAGYAIDDNDGDENKYGKLTVAQAWSAGSSFWARPEIRLYASYLTADKADNSNTFDSGRSDDTFQFGVQAEAWW</sequence>